<organism>
    <name type="scientific">Listeria monocytogenes serovar 1/2a (strain ATCC BAA-679 / EGD-e)</name>
    <dbReference type="NCBI Taxonomy" id="169963"/>
    <lineage>
        <taxon>Bacteria</taxon>
        <taxon>Bacillati</taxon>
        <taxon>Bacillota</taxon>
        <taxon>Bacilli</taxon>
        <taxon>Bacillales</taxon>
        <taxon>Listeriaceae</taxon>
        <taxon>Listeria</taxon>
    </lineage>
</organism>
<dbReference type="EMBL" id="AL591982">
    <property type="protein sequence ID" value="CAD00343.1"/>
    <property type="molecule type" value="Genomic_DNA"/>
</dbReference>
<dbReference type="PIR" id="AI1357">
    <property type="entry name" value="AI1357"/>
</dbReference>
<dbReference type="RefSeq" id="NP_465789.1">
    <property type="nucleotide sequence ID" value="NC_003210.1"/>
</dbReference>
<dbReference type="RefSeq" id="WP_009925066.1">
    <property type="nucleotide sequence ID" value="NZ_CP149495.1"/>
</dbReference>
<dbReference type="STRING" id="169963.gene:17594956"/>
<dbReference type="PaxDb" id="169963-lmo2265"/>
<dbReference type="DNASU" id="984574"/>
<dbReference type="EnsemblBacteria" id="CAD00343">
    <property type="protein sequence ID" value="CAD00343"/>
    <property type="gene ID" value="CAD00343"/>
</dbReference>
<dbReference type="GeneID" id="984574"/>
<dbReference type="KEGG" id="lmo:lmo2265"/>
<dbReference type="PATRIC" id="fig|169963.11.peg.2317"/>
<dbReference type="eggNOG" id="ENOG5033A1U">
    <property type="taxonomic scope" value="Bacteria"/>
</dbReference>
<dbReference type="HOGENOM" id="CLU_146641_0_0_9"/>
<dbReference type="OrthoDB" id="2365314at2"/>
<dbReference type="PhylomeDB" id="Q8Y513"/>
<dbReference type="BioCyc" id="LMON169963:LMO2265-MONOMER"/>
<dbReference type="Proteomes" id="UP000000817">
    <property type="component" value="Chromosome"/>
</dbReference>
<dbReference type="GO" id="GO:0005886">
    <property type="term" value="C:plasma membrane"/>
    <property type="evidence" value="ECO:0007669"/>
    <property type="project" value="UniProtKB-SubCell"/>
</dbReference>
<dbReference type="HAMAP" id="MF_01536">
    <property type="entry name" value="UPF0344"/>
    <property type="match status" value="1"/>
</dbReference>
<dbReference type="InterPro" id="IPR010899">
    <property type="entry name" value="UPF0344"/>
</dbReference>
<dbReference type="NCBIfam" id="NF010197">
    <property type="entry name" value="PRK13673.1-4"/>
    <property type="match status" value="1"/>
</dbReference>
<dbReference type="Pfam" id="PF07457">
    <property type="entry name" value="DUF1516"/>
    <property type="match status" value="1"/>
</dbReference>
<evidence type="ECO:0000255" key="1">
    <source>
        <dbReference type="HAMAP-Rule" id="MF_01536"/>
    </source>
</evidence>
<comment type="subcellular location">
    <subcellularLocation>
        <location evidence="1">Cell membrane</location>
        <topology evidence="1">Multi-pass membrane protein</topology>
    </subcellularLocation>
</comment>
<comment type="similarity">
    <text evidence="1">Belongs to the UPF0344 family.</text>
</comment>
<name>Y2265_LISMO</name>
<keyword id="KW-1003">Cell membrane</keyword>
<keyword id="KW-0472">Membrane</keyword>
<keyword id="KW-1185">Reference proteome</keyword>
<keyword id="KW-0812">Transmembrane</keyword>
<keyword id="KW-1133">Transmembrane helix</keyword>
<gene>
    <name type="ordered locus">lmo2265</name>
</gene>
<sequence>MWGYIHLISWVAIVVLTITALLIYSKSTKSFTMLQMINRVFYILVILSGIMMVKYSIEQSWILAIFKILMGIIVIGVVEMLLSYRKQQKPTGMFLMIFVIVVVITISLGFYLSGGYPLFN</sequence>
<proteinExistence type="inferred from homology"/>
<protein>
    <recommendedName>
        <fullName evidence="1">UPF0344 protein lmo2265</fullName>
    </recommendedName>
</protein>
<reference key="1">
    <citation type="journal article" date="2001" name="Science">
        <title>Comparative genomics of Listeria species.</title>
        <authorList>
            <person name="Glaser P."/>
            <person name="Frangeul L."/>
            <person name="Buchrieser C."/>
            <person name="Rusniok C."/>
            <person name="Amend A."/>
            <person name="Baquero F."/>
            <person name="Berche P."/>
            <person name="Bloecker H."/>
            <person name="Brandt P."/>
            <person name="Chakraborty T."/>
            <person name="Charbit A."/>
            <person name="Chetouani F."/>
            <person name="Couve E."/>
            <person name="de Daruvar A."/>
            <person name="Dehoux P."/>
            <person name="Domann E."/>
            <person name="Dominguez-Bernal G."/>
            <person name="Duchaud E."/>
            <person name="Durant L."/>
            <person name="Dussurget O."/>
            <person name="Entian K.-D."/>
            <person name="Fsihi H."/>
            <person name="Garcia-del Portillo F."/>
            <person name="Garrido P."/>
            <person name="Gautier L."/>
            <person name="Goebel W."/>
            <person name="Gomez-Lopez N."/>
            <person name="Hain T."/>
            <person name="Hauf J."/>
            <person name="Jackson D."/>
            <person name="Jones L.-M."/>
            <person name="Kaerst U."/>
            <person name="Kreft J."/>
            <person name="Kuhn M."/>
            <person name="Kunst F."/>
            <person name="Kurapkat G."/>
            <person name="Madueno E."/>
            <person name="Maitournam A."/>
            <person name="Mata Vicente J."/>
            <person name="Ng E."/>
            <person name="Nedjari H."/>
            <person name="Nordsiek G."/>
            <person name="Novella S."/>
            <person name="de Pablos B."/>
            <person name="Perez-Diaz J.-C."/>
            <person name="Purcell R."/>
            <person name="Remmel B."/>
            <person name="Rose M."/>
            <person name="Schlueter T."/>
            <person name="Simoes N."/>
            <person name="Tierrez A."/>
            <person name="Vazquez-Boland J.-A."/>
            <person name="Voss H."/>
            <person name="Wehland J."/>
            <person name="Cossart P."/>
        </authorList>
    </citation>
    <scope>NUCLEOTIDE SEQUENCE [LARGE SCALE GENOMIC DNA]</scope>
    <source>
        <strain>ATCC BAA-679 / EGD-e</strain>
    </source>
</reference>
<feature type="chain" id="PRO_0000105891" description="UPF0344 protein lmo2265">
    <location>
        <begin position="1"/>
        <end position="120"/>
    </location>
</feature>
<feature type="transmembrane region" description="Helical" evidence="1">
    <location>
        <begin position="3"/>
        <end position="23"/>
    </location>
</feature>
<feature type="transmembrane region" description="Helical" evidence="1">
    <location>
        <begin position="33"/>
        <end position="53"/>
    </location>
</feature>
<feature type="transmembrane region" description="Helical" evidence="1">
    <location>
        <begin position="62"/>
        <end position="82"/>
    </location>
</feature>
<feature type="transmembrane region" description="Helical" evidence="1">
    <location>
        <begin position="92"/>
        <end position="112"/>
    </location>
</feature>
<accession>Q8Y513</accession>